<protein>
    <recommendedName>
        <fullName evidence="1">Ribosome maturation factor RimP</fullName>
    </recommendedName>
</protein>
<reference key="1">
    <citation type="journal article" date="2006" name="Proc. Natl. Acad. Sci. U.S.A.">
        <title>Comparative genomics of the lactic acid bacteria.</title>
        <authorList>
            <person name="Makarova K.S."/>
            <person name="Slesarev A."/>
            <person name="Wolf Y.I."/>
            <person name="Sorokin A."/>
            <person name="Mirkin B."/>
            <person name="Koonin E.V."/>
            <person name="Pavlov A."/>
            <person name="Pavlova N."/>
            <person name="Karamychev V."/>
            <person name="Polouchine N."/>
            <person name="Shakhova V."/>
            <person name="Grigoriev I."/>
            <person name="Lou Y."/>
            <person name="Rohksar D."/>
            <person name="Lucas S."/>
            <person name="Huang K."/>
            <person name="Goodstein D.M."/>
            <person name="Hawkins T."/>
            <person name="Plengvidhya V."/>
            <person name="Welker D."/>
            <person name="Hughes J."/>
            <person name="Goh Y."/>
            <person name="Benson A."/>
            <person name="Baldwin K."/>
            <person name="Lee J.-H."/>
            <person name="Diaz-Muniz I."/>
            <person name="Dosti B."/>
            <person name="Smeianov V."/>
            <person name="Wechter W."/>
            <person name="Barabote R."/>
            <person name="Lorca G."/>
            <person name="Altermann E."/>
            <person name="Barrangou R."/>
            <person name="Ganesan B."/>
            <person name="Xie Y."/>
            <person name="Rawsthorne H."/>
            <person name="Tamir D."/>
            <person name="Parker C."/>
            <person name="Breidt F."/>
            <person name="Broadbent J.R."/>
            <person name="Hutkins R."/>
            <person name="O'Sullivan D."/>
            <person name="Steele J."/>
            <person name="Unlu G."/>
            <person name="Saier M.H. Jr."/>
            <person name="Klaenhammer T."/>
            <person name="Richardson P."/>
            <person name="Kozyavkin S."/>
            <person name="Weimer B.C."/>
            <person name="Mills D.A."/>
        </authorList>
    </citation>
    <scope>NUCLEOTIDE SEQUENCE [LARGE SCALE GENOMIC DNA]</scope>
    <source>
        <strain>ATCC 367 / BCRC 12310 / CIP 105137 / JCM 1170 / LMG 11437 / NCIMB 947 / NCTC 947</strain>
    </source>
</reference>
<name>RIMP_LEVBA</name>
<keyword id="KW-0963">Cytoplasm</keyword>
<keyword id="KW-1185">Reference proteome</keyword>
<keyword id="KW-0690">Ribosome biogenesis</keyword>
<feature type="chain" id="PRO_1000064721" description="Ribosome maturation factor RimP">
    <location>
        <begin position="1"/>
        <end position="157"/>
    </location>
</feature>
<dbReference type="EMBL" id="CP000416">
    <property type="protein sequence ID" value="ABJ64441.1"/>
    <property type="molecule type" value="Genomic_DNA"/>
</dbReference>
<dbReference type="RefSeq" id="WP_011668014.1">
    <property type="nucleotide sequence ID" value="NC_008497.1"/>
</dbReference>
<dbReference type="SMR" id="Q03QT1"/>
<dbReference type="STRING" id="387344.LVIS_1339"/>
<dbReference type="GeneID" id="56993109"/>
<dbReference type="KEGG" id="lbr:LVIS_1339"/>
<dbReference type="eggNOG" id="COG0779">
    <property type="taxonomic scope" value="Bacteria"/>
</dbReference>
<dbReference type="HOGENOM" id="CLU_070525_2_0_9"/>
<dbReference type="Proteomes" id="UP000001652">
    <property type="component" value="Chromosome"/>
</dbReference>
<dbReference type="GO" id="GO:0005829">
    <property type="term" value="C:cytosol"/>
    <property type="evidence" value="ECO:0007669"/>
    <property type="project" value="TreeGrafter"/>
</dbReference>
<dbReference type="GO" id="GO:0000028">
    <property type="term" value="P:ribosomal small subunit assembly"/>
    <property type="evidence" value="ECO:0007669"/>
    <property type="project" value="TreeGrafter"/>
</dbReference>
<dbReference type="GO" id="GO:0006412">
    <property type="term" value="P:translation"/>
    <property type="evidence" value="ECO:0007669"/>
    <property type="project" value="TreeGrafter"/>
</dbReference>
<dbReference type="CDD" id="cd01734">
    <property type="entry name" value="YlxS_C"/>
    <property type="match status" value="1"/>
</dbReference>
<dbReference type="FunFam" id="3.30.300.70:FF:000001">
    <property type="entry name" value="Ribosome maturation factor RimP"/>
    <property type="match status" value="1"/>
</dbReference>
<dbReference type="Gene3D" id="2.30.30.180">
    <property type="entry name" value="Ribosome maturation factor RimP, C-terminal domain"/>
    <property type="match status" value="1"/>
</dbReference>
<dbReference type="Gene3D" id="3.30.300.70">
    <property type="entry name" value="RimP-like superfamily, N-terminal"/>
    <property type="match status" value="1"/>
</dbReference>
<dbReference type="HAMAP" id="MF_01077">
    <property type="entry name" value="RimP"/>
    <property type="match status" value="1"/>
</dbReference>
<dbReference type="InterPro" id="IPR003728">
    <property type="entry name" value="Ribosome_maturation_RimP"/>
</dbReference>
<dbReference type="InterPro" id="IPR028998">
    <property type="entry name" value="RimP_C"/>
</dbReference>
<dbReference type="InterPro" id="IPR036847">
    <property type="entry name" value="RimP_C_sf"/>
</dbReference>
<dbReference type="InterPro" id="IPR028989">
    <property type="entry name" value="RimP_N"/>
</dbReference>
<dbReference type="InterPro" id="IPR035956">
    <property type="entry name" value="RimP_N_sf"/>
</dbReference>
<dbReference type="NCBIfam" id="NF000928">
    <property type="entry name" value="PRK00092.1-2"/>
    <property type="match status" value="1"/>
</dbReference>
<dbReference type="PANTHER" id="PTHR33867">
    <property type="entry name" value="RIBOSOME MATURATION FACTOR RIMP"/>
    <property type="match status" value="1"/>
</dbReference>
<dbReference type="PANTHER" id="PTHR33867:SF1">
    <property type="entry name" value="RIBOSOME MATURATION FACTOR RIMP"/>
    <property type="match status" value="1"/>
</dbReference>
<dbReference type="Pfam" id="PF17384">
    <property type="entry name" value="DUF150_C"/>
    <property type="match status" value="1"/>
</dbReference>
<dbReference type="Pfam" id="PF02576">
    <property type="entry name" value="RimP_N"/>
    <property type="match status" value="1"/>
</dbReference>
<dbReference type="SUPFAM" id="SSF74942">
    <property type="entry name" value="YhbC-like, C-terminal domain"/>
    <property type="match status" value="1"/>
</dbReference>
<dbReference type="SUPFAM" id="SSF75420">
    <property type="entry name" value="YhbC-like, N-terminal domain"/>
    <property type="match status" value="1"/>
</dbReference>
<gene>
    <name evidence="1" type="primary">rimP</name>
    <name type="ordered locus">LVIS_1339</name>
</gene>
<organism>
    <name type="scientific">Levilactobacillus brevis (strain ATCC 367 / BCRC 12310 / CIP 105137 / JCM 1170 / LMG 11437 / NCIMB 947 / NCTC 947)</name>
    <name type="common">Lactobacillus brevis</name>
    <dbReference type="NCBI Taxonomy" id="387344"/>
    <lineage>
        <taxon>Bacteria</taxon>
        <taxon>Bacillati</taxon>
        <taxon>Bacillota</taxon>
        <taxon>Bacilli</taxon>
        <taxon>Lactobacillales</taxon>
        <taxon>Lactobacillaceae</taxon>
        <taxon>Levilactobacillus</taxon>
    </lineage>
</organism>
<comment type="function">
    <text evidence="1">Required for maturation of 30S ribosomal subunits.</text>
</comment>
<comment type="subcellular location">
    <subcellularLocation>
        <location evidence="1">Cytoplasm</location>
    </subcellularLocation>
</comment>
<comment type="similarity">
    <text evidence="1">Belongs to the RimP family.</text>
</comment>
<accession>Q03QT1</accession>
<evidence type="ECO:0000255" key="1">
    <source>
        <dbReference type="HAMAP-Rule" id="MF_01077"/>
    </source>
</evidence>
<proteinExistence type="inferred from homology"/>
<sequence length="157" mass="17380">MSTVVETVTALAQPIVAQHQFELVDVEFVKEGKSWYLRLYIDKPGGINIEECALVSDEVSEKMDALDPDPIPQAYFLEVSSPGAERPLKKPADFEKAVGDYIHVSLYQKIGNSKVYEGTLLSLTADSLDLEVNLKGRIKTLTIPRDAVAQARLAIKF</sequence>